<gene>
    <name type="primary">Flad1</name>
</gene>
<proteinExistence type="evidence at protein level"/>
<dbReference type="EC" id="2.7.7.2"/>
<dbReference type="EMBL" id="AK044501">
    <property type="protein sequence ID" value="BAC31952.1"/>
    <property type="molecule type" value="mRNA"/>
</dbReference>
<dbReference type="EMBL" id="AK161929">
    <property type="protein sequence ID" value="BAE36639.1"/>
    <property type="molecule type" value="mRNA"/>
</dbReference>
<dbReference type="EMBL" id="BC009152">
    <property type="protein sequence ID" value="AAH09152.2"/>
    <property type="molecule type" value="mRNA"/>
</dbReference>
<dbReference type="EMBL" id="BC025817">
    <property type="protein sequence ID" value="AAH25817.1"/>
    <property type="molecule type" value="mRNA"/>
</dbReference>
<dbReference type="EMBL" id="BC046769">
    <property type="protein sequence ID" value="AAH46769.1"/>
    <property type="molecule type" value="mRNA"/>
</dbReference>
<dbReference type="CCDS" id="CCDS38492.1">
    <molecule id="Q8R123-1"/>
</dbReference>
<dbReference type="RefSeq" id="NP_001349304.1">
    <molecule id="Q8R123-1"/>
    <property type="nucleotide sequence ID" value="NM_001362375.1"/>
</dbReference>
<dbReference type="RefSeq" id="NP_001349305.1">
    <molecule id="Q8R123-1"/>
    <property type="nucleotide sequence ID" value="NM_001362376.1"/>
</dbReference>
<dbReference type="RefSeq" id="NP_796015.2">
    <molecule id="Q8R123-1"/>
    <property type="nucleotide sequence ID" value="NM_177041.4"/>
</dbReference>
<dbReference type="SMR" id="Q8R123"/>
<dbReference type="BioGRID" id="235643">
    <property type="interactions" value="6"/>
</dbReference>
<dbReference type="FunCoup" id="Q8R123">
    <property type="interactions" value="859"/>
</dbReference>
<dbReference type="IntAct" id="Q8R123">
    <property type="interactions" value="2"/>
</dbReference>
<dbReference type="STRING" id="10090.ENSMUSP00000122252"/>
<dbReference type="iPTMnet" id="Q8R123"/>
<dbReference type="PhosphoSitePlus" id="Q8R123"/>
<dbReference type="SwissPalm" id="Q8R123"/>
<dbReference type="jPOST" id="Q8R123"/>
<dbReference type="PaxDb" id="10090-ENSMUSP00000122252"/>
<dbReference type="PeptideAtlas" id="Q8R123"/>
<dbReference type="ProteomicsDB" id="267707">
    <molecule id="Q8R123-1"/>
</dbReference>
<dbReference type="ProteomicsDB" id="267708">
    <molecule id="Q8R123-2"/>
</dbReference>
<dbReference type="Pumba" id="Q8R123"/>
<dbReference type="Antibodypedia" id="34162">
    <property type="antibodies" value="147 antibodies from 24 providers"/>
</dbReference>
<dbReference type="Ensembl" id="ENSMUST00000050398.11">
    <molecule id="Q8R123-2"/>
    <property type="protein sequence ID" value="ENSMUSP00000051366.5"/>
    <property type="gene ID" value="ENSMUSG00000042642.14"/>
</dbReference>
<dbReference type="Ensembl" id="ENSMUST00000107426.8">
    <molecule id="Q8R123-1"/>
    <property type="protein sequence ID" value="ENSMUSP00000103049.2"/>
    <property type="gene ID" value="ENSMUSG00000042642.14"/>
</dbReference>
<dbReference type="Ensembl" id="ENSMUST00000129308.9">
    <molecule id="Q8R123-1"/>
    <property type="protein sequence ID" value="ENSMUSP00000122252.3"/>
    <property type="gene ID" value="ENSMUSG00000042642.14"/>
</dbReference>
<dbReference type="GeneID" id="319945"/>
<dbReference type="KEGG" id="mmu:319945"/>
<dbReference type="UCSC" id="uc008pzh.2">
    <molecule id="Q8R123-2"/>
    <property type="organism name" value="mouse"/>
</dbReference>
<dbReference type="UCSC" id="uc008pzi.1">
    <molecule id="Q8R123-1"/>
    <property type="organism name" value="mouse"/>
</dbReference>
<dbReference type="AGR" id="MGI:2443030"/>
<dbReference type="CTD" id="80308"/>
<dbReference type="MGI" id="MGI:2443030">
    <property type="gene designation" value="Flad1"/>
</dbReference>
<dbReference type="VEuPathDB" id="HostDB:ENSMUSG00000042642"/>
<dbReference type="eggNOG" id="KOG2644">
    <property type="taxonomic scope" value="Eukaryota"/>
</dbReference>
<dbReference type="GeneTree" id="ENSGT00390000007266"/>
<dbReference type="HOGENOM" id="CLU_030805_8_0_1"/>
<dbReference type="InParanoid" id="Q8R123"/>
<dbReference type="OMA" id="NSHFLCK"/>
<dbReference type="PhylomeDB" id="Q8R123"/>
<dbReference type="TreeFam" id="TF314056"/>
<dbReference type="Reactome" id="R-MMU-196843">
    <property type="pathway name" value="Vitamin B2 (riboflavin) metabolism"/>
</dbReference>
<dbReference type="UniPathway" id="UPA00277">
    <property type="reaction ID" value="UER00407"/>
</dbReference>
<dbReference type="BioGRID-ORCS" id="319945">
    <property type="hits" value="18 hits in 81 CRISPR screens"/>
</dbReference>
<dbReference type="ChiTaRS" id="Flad1">
    <property type="organism name" value="mouse"/>
</dbReference>
<dbReference type="PRO" id="PR:Q8R123"/>
<dbReference type="Proteomes" id="UP000000589">
    <property type="component" value="Chromosome 3"/>
</dbReference>
<dbReference type="RNAct" id="Q8R123">
    <property type="molecule type" value="protein"/>
</dbReference>
<dbReference type="Bgee" id="ENSMUSG00000042642">
    <property type="expression patterns" value="Expressed in interventricular septum and 248 other cell types or tissues"/>
</dbReference>
<dbReference type="ExpressionAtlas" id="Q8R123">
    <property type="expression patterns" value="baseline and differential"/>
</dbReference>
<dbReference type="GO" id="GO:0005829">
    <property type="term" value="C:cytosol"/>
    <property type="evidence" value="ECO:0000314"/>
    <property type="project" value="MGI"/>
</dbReference>
<dbReference type="GO" id="GO:0005759">
    <property type="term" value="C:mitochondrial matrix"/>
    <property type="evidence" value="ECO:0007669"/>
    <property type="project" value="Ensembl"/>
</dbReference>
<dbReference type="GO" id="GO:0005886">
    <property type="term" value="C:plasma membrane"/>
    <property type="evidence" value="ECO:0007669"/>
    <property type="project" value="Ensembl"/>
</dbReference>
<dbReference type="GO" id="GO:0005524">
    <property type="term" value="F:ATP binding"/>
    <property type="evidence" value="ECO:0007669"/>
    <property type="project" value="UniProtKB-KW"/>
</dbReference>
<dbReference type="GO" id="GO:0003919">
    <property type="term" value="F:FMN adenylyltransferase activity"/>
    <property type="evidence" value="ECO:0000314"/>
    <property type="project" value="MGI"/>
</dbReference>
<dbReference type="GO" id="GO:0042802">
    <property type="term" value="F:identical protein binding"/>
    <property type="evidence" value="ECO:0007669"/>
    <property type="project" value="Ensembl"/>
</dbReference>
<dbReference type="GO" id="GO:0006747">
    <property type="term" value="P:FAD biosynthetic process"/>
    <property type="evidence" value="ECO:0007669"/>
    <property type="project" value="UniProtKB-UniPathway"/>
</dbReference>
<dbReference type="GO" id="GO:0072388">
    <property type="term" value="P:flavin adenine dinucleotide biosynthetic process"/>
    <property type="evidence" value="ECO:0000314"/>
    <property type="project" value="MGI"/>
</dbReference>
<dbReference type="GO" id="GO:0006771">
    <property type="term" value="P:riboflavin metabolic process"/>
    <property type="evidence" value="ECO:0000314"/>
    <property type="project" value="MGI"/>
</dbReference>
<dbReference type="CDD" id="cd00885">
    <property type="entry name" value="cinA"/>
    <property type="match status" value="1"/>
</dbReference>
<dbReference type="CDD" id="cd23948">
    <property type="entry name" value="FAD_synthase"/>
    <property type="match status" value="1"/>
</dbReference>
<dbReference type="FunFam" id="3.40.50.620:FF:000113">
    <property type="entry name" value="FAD synthase"/>
    <property type="match status" value="1"/>
</dbReference>
<dbReference type="FunFam" id="3.40.980.10:FF:000007">
    <property type="entry name" value="FAD synthase"/>
    <property type="match status" value="1"/>
</dbReference>
<dbReference type="Gene3D" id="3.40.50.620">
    <property type="entry name" value="HUPs"/>
    <property type="match status" value="1"/>
</dbReference>
<dbReference type="Gene3D" id="3.40.980.10">
    <property type="entry name" value="MoaB/Mog-like domain"/>
    <property type="match status" value="1"/>
</dbReference>
<dbReference type="InterPro" id="IPR012183">
    <property type="entry name" value="FAD_synth_MoaB/Mog-bd"/>
</dbReference>
<dbReference type="InterPro" id="IPR056596">
    <property type="entry name" value="FLAD1_M"/>
</dbReference>
<dbReference type="InterPro" id="IPR036425">
    <property type="entry name" value="MoaB/Mog-like_dom_sf"/>
</dbReference>
<dbReference type="InterPro" id="IPR001453">
    <property type="entry name" value="MoaB/Mog_dom"/>
</dbReference>
<dbReference type="InterPro" id="IPR002500">
    <property type="entry name" value="PAPS_reduct_dom"/>
</dbReference>
<dbReference type="InterPro" id="IPR014729">
    <property type="entry name" value="Rossmann-like_a/b/a_fold"/>
</dbReference>
<dbReference type="PANTHER" id="PTHR23293:SF9">
    <property type="entry name" value="FAD SYNTHASE"/>
    <property type="match status" value="1"/>
</dbReference>
<dbReference type="PANTHER" id="PTHR23293">
    <property type="entry name" value="FAD SYNTHETASE-RELATED FMN ADENYLYLTRANSFERASE"/>
    <property type="match status" value="1"/>
</dbReference>
<dbReference type="Pfam" id="PF24102">
    <property type="entry name" value="FLAD1_M"/>
    <property type="match status" value="1"/>
</dbReference>
<dbReference type="Pfam" id="PF00994">
    <property type="entry name" value="MoCF_biosynth"/>
    <property type="match status" value="1"/>
</dbReference>
<dbReference type="Pfam" id="PF01507">
    <property type="entry name" value="PAPS_reduct"/>
    <property type="match status" value="1"/>
</dbReference>
<dbReference type="PIRSF" id="PIRSF036620">
    <property type="entry name" value="MPTbdFAD"/>
    <property type="match status" value="1"/>
</dbReference>
<dbReference type="SMART" id="SM00852">
    <property type="entry name" value="MoCF_biosynth"/>
    <property type="match status" value="1"/>
</dbReference>
<dbReference type="SUPFAM" id="SSF52402">
    <property type="entry name" value="Adenine nucleotide alpha hydrolases-like"/>
    <property type="match status" value="1"/>
</dbReference>
<dbReference type="SUPFAM" id="SSF53218">
    <property type="entry name" value="Molybdenum cofactor biosynthesis proteins"/>
    <property type="match status" value="1"/>
</dbReference>
<sequence>MASRASELPPGSGRSVTAGIIIVGDEILKGHTQDTNTYFLCRTLRSLGVQVCRVSVVPDEVATIASEVNSFSRRFTHVLTAGGIGPTHDDVTFEAVAQAFGEELKPHPELQAAIKTLGGEGWEKLSMVPSSARLHYGTDPRTGHPFRFPLVSVRNVYLFPGIPELLRRVLEGLKGLFQNTAVQFHLKELYVAASEGSIAPILSEAQAHFGRRLSLGSYPDWSSNYFQVKLILDSEEKEPLEECLAYLTARLPQGSLVPYQPDAVEKAGEAVYKLAESGSCLGKKVAGALQTIETALAQYHLSQLCVGFNGGKDCTALLHLFHAAVQRKFPDVPKPLQILYIRSISPFPELEQFLQDTIKRYNLQVLEAEGNMKQALGELQEKHPQLEAVLMGTRRTDPYSCSLSHFSPTDPGWPSFMRINPLLDWTYRNIWEFLRQLFVPYCILYDRGYTSLGSRENTTQNPALKCLSPGGHPVYRPAYLLENEDEERNSRM</sequence>
<comment type="function">
    <text evidence="1">Catalyzes the adenylation of flavin mononucleotide (FMN) to form flavin adenine dinucleotide (FAD) coenzyme.</text>
</comment>
<comment type="catalytic activity">
    <reaction>
        <text>FMN + ATP + H(+) = FAD + diphosphate</text>
        <dbReference type="Rhea" id="RHEA:17237"/>
        <dbReference type="ChEBI" id="CHEBI:15378"/>
        <dbReference type="ChEBI" id="CHEBI:30616"/>
        <dbReference type="ChEBI" id="CHEBI:33019"/>
        <dbReference type="ChEBI" id="CHEBI:57692"/>
        <dbReference type="ChEBI" id="CHEBI:58210"/>
        <dbReference type="EC" id="2.7.7.2"/>
    </reaction>
</comment>
<comment type="cofactor">
    <cofactor evidence="1">
        <name>Mg(2+)</name>
        <dbReference type="ChEBI" id="CHEBI:18420"/>
    </cofactor>
</comment>
<comment type="pathway">
    <text>Cofactor biosynthesis; FAD biosynthesis; FAD from FMN: step 1/1.</text>
</comment>
<comment type="subcellular location">
    <subcellularLocation>
        <location evidence="1">Cytoplasm</location>
    </subcellularLocation>
</comment>
<comment type="alternative products">
    <event type="alternative splicing"/>
    <isoform>
        <id>Q8R123-1</id>
        <name>1</name>
        <sequence type="displayed"/>
    </isoform>
    <isoform>
        <id>Q8R123-2</id>
        <name>2</name>
        <sequence type="described" ref="VSP_027955"/>
    </isoform>
</comment>
<comment type="domain">
    <text>The molybdenum cofactor biosynthesis protein-like region may not be functional.</text>
</comment>
<comment type="similarity">
    <text evidence="3">In the N-terminal section; belongs to the MoaB/Mog family.</text>
</comment>
<comment type="similarity">
    <text evidence="3">In the C-terminal section; belongs to the PAPS reductase family. FAD1 subfamily.</text>
</comment>
<organism>
    <name type="scientific">Mus musculus</name>
    <name type="common">Mouse</name>
    <dbReference type="NCBI Taxonomy" id="10090"/>
    <lineage>
        <taxon>Eukaryota</taxon>
        <taxon>Metazoa</taxon>
        <taxon>Chordata</taxon>
        <taxon>Craniata</taxon>
        <taxon>Vertebrata</taxon>
        <taxon>Euteleostomi</taxon>
        <taxon>Mammalia</taxon>
        <taxon>Eutheria</taxon>
        <taxon>Euarchontoglires</taxon>
        <taxon>Glires</taxon>
        <taxon>Rodentia</taxon>
        <taxon>Myomorpha</taxon>
        <taxon>Muroidea</taxon>
        <taxon>Muridae</taxon>
        <taxon>Murinae</taxon>
        <taxon>Mus</taxon>
        <taxon>Mus</taxon>
    </lineage>
</organism>
<name>FAD1_MOUSE</name>
<reference key="1">
    <citation type="journal article" date="2005" name="Science">
        <title>The transcriptional landscape of the mammalian genome.</title>
        <authorList>
            <person name="Carninci P."/>
            <person name="Kasukawa T."/>
            <person name="Katayama S."/>
            <person name="Gough J."/>
            <person name="Frith M.C."/>
            <person name="Maeda N."/>
            <person name="Oyama R."/>
            <person name="Ravasi T."/>
            <person name="Lenhard B."/>
            <person name="Wells C."/>
            <person name="Kodzius R."/>
            <person name="Shimokawa K."/>
            <person name="Bajic V.B."/>
            <person name="Brenner S.E."/>
            <person name="Batalov S."/>
            <person name="Forrest A.R."/>
            <person name="Zavolan M."/>
            <person name="Davis M.J."/>
            <person name="Wilming L.G."/>
            <person name="Aidinis V."/>
            <person name="Allen J.E."/>
            <person name="Ambesi-Impiombato A."/>
            <person name="Apweiler R."/>
            <person name="Aturaliya R.N."/>
            <person name="Bailey T.L."/>
            <person name="Bansal M."/>
            <person name="Baxter L."/>
            <person name="Beisel K.W."/>
            <person name="Bersano T."/>
            <person name="Bono H."/>
            <person name="Chalk A.M."/>
            <person name="Chiu K.P."/>
            <person name="Choudhary V."/>
            <person name="Christoffels A."/>
            <person name="Clutterbuck D.R."/>
            <person name="Crowe M.L."/>
            <person name="Dalla E."/>
            <person name="Dalrymple B.P."/>
            <person name="de Bono B."/>
            <person name="Della Gatta G."/>
            <person name="di Bernardo D."/>
            <person name="Down T."/>
            <person name="Engstrom P."/>
            <person name="Fagiolini M."/>
            <person name="Faulkner G."/>
            <person name="Fletcher C.F."/>
            <person name="Fukushima T."/>
            <person name="Furuno M."/>
            <person name="Futaki S."/>
            <person name="Gariboldi M."/>
            <person name="Georgii-Hemming P."/>
            <person name="Gingeras T.R."/>
            <person name="Gojobori T."/>
            <person name="Green R.E."/>
            <person name="Gustincich S."/>
            <person name="Harbers M."/>
            <person name="Hayashi Y."/>
            <person name="Hensch T.K."/>
            <person name="Hirokawa N."/>
            <person name="Hill D."/>
            <person name="Huminiecki L."/>
            <person name="Iacono M."/>
            <person name="Ikeo K."/>
            <person name="Iwama A."/>
            <person name="Ishikawa T."/>
            <person name="Jakt M."/>
            <person name="Kanapin A."/>
            <person name="Katoh M."/>
            <person name="Kawasawa Y."/>
            <person name="Kelso J."/>
            <person name="Kitamura H."/>
            <person name="Kitano H."/>
            <person name="Kollias G."/>
            <person name="Krishnan S.P."/>
            <person name="Kruger A."/>
            <person name="Kummerfeld S.K."/>
            <person name="Kurochkin I.V."/>
            <person name="Lareau L.F."/>
            <person name="Lazarevic D."/>
            <person name="Lipovich L."/>
            <person name="Liu J."/>
            <person name="Liuni S."/>
            <person name="McWilliam S."/>
            <person name="Madan Babu M."/>
            <person name="Madera M."/>
            <person name="Marchionni L."/>
            <person name="Matsuda H."/>
            <person name="Matsuzawa S."/>
            <person name="Miki H."/>
            <person name="Mignone F."/>
            <person name="Miyake S."/>
            <person name="Morris K."/>
            <person name="Mottagui-Tabar S."/>
            <person name="Mulder N."/>
            <person name="Nakano N."/>
            <person name="Nakauchi H."/>
            <person name="Ng P."/>
            <person name="Nilsson R."/>
            <person name="Nishiguchi S."/>
            <person name="Nishikawa S."/>
            <person name="Nori F."/>
            <person name="Ohara O."/>
            <person name="Okazaki Y."/>
            <person name="Orlando V."/>
            <person name="Pang K.C."/>
            <person name="Pavan W.J."/>
            <person name="Pavesi G."/>
            <person name="Pesole G."/>
            <person name="Petrovsky N."/>
            <person name="Piazza S."/>
            <person name="Reed J."/>
            <person name="Reid J.F."/>
            <person name="Ring B.Z."/>
            <person name="Ringwald M."/>
            <person name="Rost B."/>
            <person name="Ruan Y."/>
            <person name="Salzberg S.L."/>
            <person name="Sandelin A."/>
            <person name="Schneider C."/>
            <person name="Schoenbach C."/>
            <person name="Sekiguchi K."/>
            <person name="Semple C.A."/>
            <person name="Seno S."/>
            <person name="Sessa L."/>
            <person name="Sheng Y."/>
            <person name="Shibata Y."/>
            <person name="Shimada H."/>
            <person name="Shimada K."/>
            <person name="Silva D."/>
            <person name="Sinclair B."/>
            <person name="Sperling S."/>
            <person name="Stupka E."/>
            <person name="Sugiura K."/>
            <person name="Sultana R."/>
            <person name="Takenaka Y."/>
            <person name="Taki K."/>
            <person name="Tammoja K."/>
            <person name="Tan S.L."/>
            <person name="Tang S."/>
            <person name="Taylor M.S."/>
            <person name="Tegner J."/>
            <person name="Teichmann S.A."/>
            <person name="Ueda H.R."/>
            <person name="van Nimwegen E."/>
            <person name="Verardo R."/>
            <person name="Wei C.L."/>
            <person name="Yagi K."/>
            <person name="Yamanishi H."/>
            <person name="Zabarovsky E."/>
            <person name="Zhu S."/>
            <person name="Zimmer A."/>
            <person name="Hide W."/>
            <person name="Bult C."/>
            <person name="Grimmond S.M."/>
            <person name="Teasdale R.D."/>
            <person name="Liu E.T."/>
            <person name="Brusic V."/>
            <person name="Quackenbush J."/>
            <person name="Wahlestedt C."/>
            <person name="Mattick J.S."/>
            <person name="Hume D.A."/>
            <person name="Kai C."/>
            <person name="Sasaki D."/>
            <person name="Tomaru Y."/>
            <person name="Fukuda S."/>
            <person name="Kanamori-Katayama M."/>
            <person name="Suzuki M."/>
            <person name="Aoki J."/>
            <person name="Arakawa T."/>
            <person name="Iida J."/>
            <person name="Imamura K."/>
            <person name="Itoh M."/>
            <person name="Kato T."/>
            <person name="Kawaji H."/>
            <person name="Kawagashira N."/>
            <person name="Kawashima T."/>
            <person name="Kojima M."/>
            <person name="Kondo S."/>
            <person name="Konno H."/>
            <person name="Nakano K."/>
            <person name="Ninomiya N."/>
            <person name="Nishio T."/>
            <person name="Okada M."/>
            <person name="Plessy C."/>
            <person name="Shibata K."/>
            <person name="Shiraki T."/>
            <person name="Suzuki S."/>
            <person name="Tagami M."/>
            <person name="Waki K."/>
            <person name="Watahiki A."/>
            <person name="Okamura-Oho Y."/>
            <person name="Suzuki H."/>
            <person name="Kawai J."/>
            <person name="Hayashizaki Y."/>
        </authorList>
    </citation>
    <scope>NUCLEOTIDE SEQUENCE [LARGE SCALE MRNA] (ISOFORMS 1 AND 2)</scope>
    <source>
        <strain>C57BL/6J</strain>
        <tissue>Olfactory bulb</tissue>
        <tissue>Retina</tissue>
    </source>
</reference>
<reference key="2">
    <citation type="journal article" date="2004" name="Genome Res.">
        <title>The status, quality, and expansion of the NIH full-length cDNA project: the Mammalian Gene Collection (MGC).</title>
        <authorList>
            <consortium name="The MGC Project Team"/>
        </authorList>
    </citation>
    <scope>NUCLEOTIDE SEQUENCE [LARGE SCALE MRNA] (ISOFORM 1)</scope>
    <source>
        <strain>C57BL/6J</strain>
        <strain>FVB/N</strain>
        <tissue>Brain</tissue>
        <tissue>Liver</tissue>
        <tissue>Mammary gland</tissue>
    </source>
</reference>
<reference key="3">
    <citation type="submission" date="2009-01" db="UniProtKB">
        <authorList>
            <person name="Lubec G."/>
            <person name="Sunyer B."/>
            <person name="Chen W.-Q."/>
        </authorList>
    </citation>
    <scope>PROTEIN SEQUENCE OF 230-237</scope>
    <scope>IDENTIFICATION BY MASS SPECTROMETRY</scope>
    <source>
        <strain>OF1</strain>
        <tissue>Hippocampus</tissue>
    </source>
</reference>
<reference key="4">
    <citation type="journal article" date="2010" name="Cell">
        <title>A tissue-specific atlas of mouse protein phosphorylation and expression.</title>
        <authorList>
            <person name="Huttlin E.L."/>
            <person name="Jedrychowski M.P."/>
            <person name="Elias J.E."/>
            <person name="Goswami T."/>
            <person name="Rad R."/>
            <person name="Beausoleil S.A."/>
            <person name="Villen J."/>
            <person name="Haas W."/>
            <person name="Sowa M.E."/>
            <person name="Gygi S.P."/>
        </authorList>
    </citation>
    <scope>PHOSPHORYLATION [LARGE SCALE ANALYSIS] AT SER-468</scope>
    <scope>IDENTIFICATION BY MASS SPECTROMETRY [LARGE SCALE ANALYSIS]</scope>
    <source>
        <tissue>Brain</tissue>
        <tissue>Brown adipose tissue</tissue>
        <tissue>Heart</tissue>
        <tissue>Kidney</tissue>
        <tissue>Liver</tissue>
        <tissue>Spleen</tissue>
        <tissue>Testis</tissue>
    </source>
</reference>
<reference key="5">
    <citation type="journal article" date="2013" name="Mol. Cell">
        <title>SIRT5-mediated lysine desuccinylation impacts diverse metabolic pathways.</title>
        <authorList>
            <person name="Park J."/>
            <person name="Chen Y."/>
            <person name="Tishkoff D.X."/>
            <person name="Peng C."/>
            <person name="Tan M."/>
            <person name="Dai L."/>
            <person name="Xie Z."/>
            <person name="Zhang Y."/>
            <person name="Zwaans B.M."/>
            <person name="Skinner M.E."/>
            <person name="Lombard D.B."/>
            <person name="Zhao Y."/>
        </authorList>
    </citation>
    <scope>SUCCINYLATION [LARGE SCALE ANALYSIS] AT LYS-283</scope>
    <scope>IDENTIFICATION BY MASS SPECTROMETRY [LARGE SCALE ANALYSIS]</scope>
    <source>
        <tissue>Embryonic fibroblast</tissue>
        <tissue>Liver</tissue>
    </source>
</reference>
<reference key="6">
    <citation type="journal article" date="2013" name="Proc. Natl. Acad. Sci. U.S.A.">
        <title>Label-free quantitative proteomics of the lysine acetylome in mitochondria identifies substrates of SIRT3 in metabolic pathways.</title>
        <authorList>
            <person name="Rardin M.J."/>
            <person name="Newman J.C."/>
            <person name="Held J.M."/>
            <person name="Cusack M.P."/>
            <person name="Sorensen D.J."/>
            <person name="Li B."/>
            <person name="Schilling B."/>
            <person name="Mooney S.D."/>
            <person name="Kahn C.R."/>
            <person name="Verdin E."/>
            <person name="Gibson B.W."/>
        </authorList>
    </citation>
    <scope>ACETYLATION [LARGE SCALE ANALYSIS] AT LYS-283</scope>
    <scope>IDENTIFICATION BY MASS SPECTROMETRY [LARGE SCALE ANALYSIS]</scope>
    <source>
        <tissue>Liver</tissue>
    </source>
</reference>
<evidence type="ECO:0000250" key="1"/>
<evidence type="ECO:0000303" key="2">
    <source>
    </source>
</evidence>
<evidence type="ECO:0000305" key="3"/>
<evidence type="ECO:0007744" key="4">
    <source>
    </source>
</evidence>
<evidence type="ECO:0007744" key="5">
    <source>
    </source>
</evidence>
<evidence type="ECO:0007744" key="6">
    <source>
    </source>
</evidence>
<protein>
    <recommendedName>
        <fullName>FAD synthase</fullName>
        <ecNumber>2.7.7.2</ecNumber>
    </recommendedName>
    <alternativeName>
        <fullName>FAD pyrophosphorylase</fullName>
    </alternativeName>
    <alternativeName>
        <fullName>FMN adenylyltransferase</fullName>
    </alternativeName>
    <alternativeName>
        <fullName>Flavin adenine dinucleotide synthase</fullName>
    </alternativeName>
    <domain>
        <recommendedName>
            <fullName>Molybdenum cofactor biosynthesis protein-like region</fullName>
        </recommendedName>
    </domain>
    <domain>
        <recommendedName>
            <fullName>FAD synthase region</fullName>
        </recommendedName>
    </domain>
</protein>
<feature type="chain" id="PRO_0000302738" description="FAD synthase">
    <location>
        <begin position="1"/>
        <end position="492"/>
    </location>
</feature>
<feature type="region of interest" description="Molybdenum cofactor biosynthesis protein-like">
    <location>
        <begin position="19"/>
        <end position="110"/>
    </location>
</feature>
<feature type="region of interest" description="FAD synthase">
    <location>
        <begin position="303"/>
        <end position="460"/>
    </location>
</feature>
<feature type="modified residue" description="N6-acetyllysine; alternate" evidence="5">
    <location>
        <position position="283"/>
    </location>
</feature>
<feature type="modified residue" description="N6-succinyllysine; alternate" evidence="6">
    <location>
        <position position="283"/>
    </location>
</feature>
<feature type="modified residue" description="Phosphoserine" evidence="4">
    <location>
        <position position="468"/>
    </location>
</feature>
<feature type="splice variant" id="VSP_027955" description="In isoform 2." evidence="2">
    <original>M</original>
    <variation>IPKTPGASWPSPRMGHKELKKEPRTLL</variation>
    <location>
        <position position="492"/>
    </location>
</feature>
<feature type="sequence conflict" description="In Ref. 1; BAE36639." evidence="3" ref="1">
    <original>R</original>
    <variation>S</variation>
    <location>
        <position position="73"/>
    </location>
</feature>
<feature type="sequence conflict" description="In Ref. 1; BAE36639." evidence="3" ref="1">
    <original>L</original>
    <variation>Q</variation>
    <location>
        <position position="390"/>
    </location>
</feature>
<keyword id="KW-0007">Acetylation</keyword>
<keyword id="KW-0025">Alternative splicing</keyword>
<keyword id="KW-0067">ATP-binding</keyword>
<keyword id="KW-0963">Cytoplasm</keyword>
<keyword id="KW-0903">Direct protein sequencing</keyword>
<keyword id="KW-0274">FAD</keyword>
<keyword id="KW-0285">Flavoprotein</keyword>
<keyword id="KW-0288">FMN</keyword>
<keyword id="KW-0547">Nucleotide-binding</keyword>
<keyword id="KW-0548">Nucleotidyltransferase</keyword>
<keyword id="KW-0597">Phosphoprotein</keyword>
<keyword id="KW-1185">Reference proteome</keyword>
<keyword id="KW-0808">Transferase</keyword>
<accession>Q8R123</accession>
<accession>Q3TSN6</accession>
<accession>Q8BXQ1</accession>